<evidence type="ECO:0000255" key="1">
    <source>
        <dbReference type="HAMAP-Rule" id="MF_00612"/>
    </source>
</evidence>
<protein>
    <recommendedName>
        <fullName evidence="1">UPF0225 protein YchJ</fullName>
    </recommendedName>
</protein>
<organism>
    <name type="scientific">Escherichia coli (strain ATCC 8739 / DSM 1576 / NBRC 3972 / NCIMB 8545 / WDCM 00012 / Crooks)</name>
    <dbReference type="NCBI Taxonomy" id="481805"/>
    <lineage>
        <taxon>Bacteria</taxon>
        <taxon>Pseudomonadati</taxon>
        <taxon>Pseudomonadota</taxon>
        <taxon>Gammaproteobacteria</taxon>
        <taxon>Enterobacterales</taxon>
        <taxon>Enterobacteriaceae</taxon>
        <taxon>Escherichia</taxon>
    </lineage>
</organism>
<sequence>MSQLCPCGSAVEYSLCCHPYVSGEKVAPDPEHLMRSRYCAFVMQDADYLIKTWHPSCGAAALRAELIAGFAHTEWLGLTVFEHCWQDADNIGFVSFVARFTEGGKTGAIIERSRFLKENGQWYYIDGTRPQFGRNDPCPCGSGKKFKKCCGQ</sequence>
<gene>
    <name evidence="1" type="primary">ychJ</name>
    <name type="ordered locus">EcolC_2394</name>
</gene>
<accession>B1ITM1</accession>
<feature type="chain" id="PRO_1000082574" description="UPF0225 protein YchJ">
    <location>
        <begin position="1"/>
        <end position="152"/>
    </location>
</feature>
<comment type="similarity">
    <text evidence="1">Belongs to the UPF0225 family.</text>
</comment>
<reference key="1">
    <citation type="submission" date="2008-02" db="EMBL/GenBank/DDBJ databases">
        <title>Complete sequence of Escherichia coli C str. ATCC 8739.</title>
        <authorList>
            <person name="Copeland A."/>
            <person name="Lucas S."/>
            <person name="Lapidus A."/>
            <person name="Glavina del Rio T."/>
            <person name="Dalin E."/>
            <person name="Tice H."/>
            <person name="Bruce D."/>
            <person name="Goodwin L."/>
            <person name="Pitluck S."/>
            <person name="Kiss H."/>
            <person name="Brettin T."/>
            <person name="Detter J.C."/>
            <person name="Han C."/>
            <person name="Kuske C.R."/>
            <person name="Schmutz J."/>
            <person name="Larimer F."/>
            <person name="Land M."/>
            <person name="Hauser L."/>
            <person name="Kyrpides N."/>
            <person name="Mikhailova N."/>
            <person name="Ingram L."/>
            <person name="Richardson P."/>
        </authorList>
    </citation>
    <scope>NUCLEOTIDE SEQUENCE [LARGE SCALE GENOMIC DNA]</scope>
    <source>
        <strain>ATCC 8739 / DSM 1576 / NBRC 3972 / NCIMB 8545 / WDCM 00012 / Crooks</strain>
    </source>
</reference>
<name>YCHJ_ECOLC</name>
<dbReference type="EMBL" id="CP000946">
    <property type="protein sequence ID" value="ACA78028.1"/>
    <property type="molecule type" value="Genomic_DNA"/>
</dbReference>
<dbReference type="RefSeq" id="WP_001362540.1">
    <property type="nucleotide sequence ID" value="NZ_MTFT01000016.1"/>
</dbReference>
<dbReference type="SMR" id="B1ITM1"/>
<dbReference type="KEGG" id="ecl:EcolC_2394"/>
<dbReference type="HOGENOM" id="CLU_099590_0_0_6"/>
<dbReference type="Gene3D" id="3.10.450.50">
    <property type="match status" value="1"/>
</dbReference>
<dbReference type="HAMAP" id="MF_00612">
    <property type="entry name" value="UPF0225"/>
    <property type="match status" value="1"/>
</dbReference>
<dbReference type="InterPro" id="IPR032710">
    <property type="entry name" value="NTF2-like_dom_sf"/>
</dbReference>
<dbReference type="InterPro" id="IPR004027">
    <property type="entry name" value="SEC_C_motif"/>
</dbReference>
<dbReference type="InterPro" id="IPR023006">
    <property type="entry name" value="UPF0225"/>
</dbReference>
<dbReference type="InterPro" id="IPR048469">
    <property type="entry name" value="YchJ-like_M"/>
</dbReference>
<dbReference type="NCBIfam" id="NF002449">
    <property type="entry name" value="PRK01617.1"/>
    <property type="match status" value="1"/>
</dbReference>
<dbReference type="NCBIfam" id="NF002486">
    <property type="entry name" value="PRK01752.1"/>
    <property type="match status" value="1"/>
</dbReference>
<dbReference type="PANTHER" id="PTHR33747:SF1">
    <property type="entry name" value="ADENYLATE CYCLASE-ASSOCIATED CAP C-TERMINAL DOMAIN-CONTAINING PROTEIN"/>
    <property type="match status" value="1"/>
</dbReference>
<dbReference type="PANTHER" id="PTHR33747">
    <property type="entry name" value="UPF0225 PROTEIN SCO1677"/>
    <property type="match status" value="1"/>
</dbReference>
<dbReference type="Pfam" id="PF02810">
    <property type="entry name" value="SEC-C"/>
    <property type="match status" value="2"/>
</dbReference>
<dbReference type="Pfam" id="PF17775">
    <property type="entry name" value="YchJ_M-like"/>
    <property type="match status" value="1"/>
</dbReference>
<dbReference type="SUPFAM" id="SSF54427">
    <property type="entry name" value="NTF2-like"/>
    <property type="match status" value="1"/>
</dbReference>
<dbReference type="SUPFAM" id="SSF103642">
    <property type="entry name" value="Sec-C motif"/>
    <property type="match status" value="1"/>
</dbReference>
<proteinExistence type="inferred from homology"/>